<proteinExistence type="inferred from homology"/>
<keyword id="KW-0067">ATP-binding</keyword>
<keyword id="KW-0418">Kinase</keyword>
<keyword id="KW-0547">Nucleotide-binding</keyword>
<keyword id="KW-0539">Nucleus</keyword>
<keyword id="KW-0597">Phosphoprotein</keyword>
<keyword id="KW-1185">Reference proteome</keyword>
<keyword id="KW-0723">Serine/threonine-protein kinase</keyword>
<keyword id="KW-0808">Transferase</keyword>
<name>OSK4_ORYSI</name>
<protein>
    <recommendedName>
        <fullName evidence="1">Serine/threonine protein kinase OSK4</fullName>
        <shortName evidence="1">OsK4</shortName>
        <ecNumber evidence="1">2.7.11.1</ecNumber>
    </recommendedName>
</protein>
<feature type="chain" id="PRO_0000438042" description="Serine/threonine protein kinase OSK4">
    <location>
        <begin position="1"/>
        <end position="509"/>
    </location>
</feature>
<feature type="domain" description="Protein kinase" evidence="2">
    <location>
        <begin position="17"/>
        <end position="269"/>
    </location>
</feature>
<feature type="domain" description="UBA" evidence="3">
    <location>
        <begin position="290"/>
        <end position="330"/>
    </location>
</feature>
<feature type="domain" description="KA1" evidence="4">
    <location>
        <begin position="460"/>
        <end position="508"/>
    </location>
</feature>
<feature type="active site" description="Proton acceptor" evidence="2">
    <location>
        <position position="140"/>
    </location>
</feature>
<feature type="binding site" evidence="2">
    <location>
        <begin position="23"/>
        <end position="31"/>
    </location>
    <ligand>
        <name>ATP</name>
        <dbReference type="ChEBI" id="CHEBI:30616"/>
    </ligand>
</feature>
<feature type="binding site" evidence="2">
    <location>
        <position position="46"/>
    </location>
    <ligand>
        <name>ATP</name>
        <dbReference type="ChEBI" id="CHEBI:30616"/>
    </ligand>
</feature>
<dbReference type="EC" id="2.7.11.1" evidence="1"/>
<dbReference type="EMBL" id="CM000133">
    <property type="protein sequence ID" value="EEC83761.1"/>
    <property type="molecule type" value="Genomic_DNA"/>
</dbReference>
<dbReference type="SMR" id="B8BBT7"/>
<dbReference type="STRING" id="39946.B8BBT7"/>
<dbReference type="iPTMnet" id="B8BBT7"/>
<dbReference type="EnsemblPlants" id="BGIOSGA028869-TA">
    <property type="protein sequence ID" value="BGIOSGA028869-PA"/>
    <property type="gene ID" value="BGIOSGA028869"/>
</dbReference>
<dbReference type="EnsemblPlants" id="OsGoSa_08g0019180.01">
    <property type="protein sequence ID" value="OsGoSa_08g0019180.01"/>
    <property type="gene ID" value="OsGoSa_08g0019180"/>
</dbReference>
<dbReference type="EnsemblPlants" id="OsGoSa_08g0019180.03">
    <property type="protein sequence ID" value="OsGoSa_08g0019180.03"/>
    <property type="gene ID" value="OsGoSa_08g0019180"/>
</dbReference>
<dbReference type="EnsemblPlants" id="OsGoSa_08g0019180.04">
    <property type="protein sequence ID" value="OsGoSa_08g0019180.04"/>
    <property type="gene ID" value="OsGoSa_08g0019180"/>
</dbReference>
<dbReference type="EnsemblPlants" id="OsIR64_08g0019750.01">
    <property type="protein sequence ID" value="OsIR64_08g0019750.01"/>
    <property type="gene ID" value="OsIR64_08g0019750"/>
</dbReference>
<dbReference type="EnsemblPlants" id="OsIR64_08g0019750.03">
    <property type="protein sequence ID" value="OsIR64_08g0019750.03"/>
    <property type="gene ID" value="OsIR64_08g0019750"/>
</dbReference>
<dbReference type="EnsemblPlants" id="OsIR64_08g0019750.04">
    <property type="protein sequence ID" value="OsIR64_08g0019750.04"/>
    <property type="gene ID" value="OsIR64_08g0019750"/>
</dbReference>
<dbReference type="EnsemblPlants" id="OsKYG_08g0019330.01">
    <property type="protein sequence ID" value="OsKYG_08g0019330.01"/>
    <property type="gene ID" value="OsKYG_08g0019330"/>
</dbReference>
<dbReference type="EnsemblPlants" id="OsKYG_08g0019330.03">
    <property type="protein sequence ID" value="OsKYG_08g0019330.03"/>
    <property type="gene ID" value="OsKYG_08g0019330"/>
</dbReference>
<dbReference type="EnsemblPlants" id="OsKYG_08g0019330.04">
    <property type="protein sequence ID" value="OsKYG_08g0019330.04"/>
    <property type="gene ID" value="OsKYG_08g0019330"/>
</dbReference>
<dbReference type="EnsemblPlants" id="OsLaMu_08g0019390.01">
    <property type="protein sequence ID" value="OsLaMu_08g0019390.01"/>
    <property type="gene ID" value="OsLaMu_08g0019390"/>
</dbReference>
<dbReference type="EnsemblPlants" id="OsLaMu_08g0019390.03">
    <property type="protein sequence ID" value="OsLaMu_08g0019390.03"/>
    <property type="gene ID" value="OsLaMu_08g0019390"/>
</dbReference>
<dbReference type="EnsemblPlants" id="OsLaMu_08g0019390.04">
    <property type="protein sequence ID" value="OsLaMu_08g0019390.04"/>
    <property type="gene ID" value="OsLaMu_08g0019390"/>
</dbReference>
<dbReference type="EnsemblPlants" id="OsLima_08g0019060.01">
    <property type="protein sequence ID" value="OsLima_08g0019060.01"/>
    <property type="gene ID" value="OsLima_08g0019060"/>
</dbReference>
<dbReference type="EnsemblPlants" id="OsLima_08g0019060.03">
    <property type="protein sequence ID" value="OsLima_08g0019060.03"/>
    <property type="gene ID" value="OsLima_08g0019060"/>
</dbReference>
<dbReference type="EnsemblPlants" id="OsLima_08g0019060.04">
    <property type="protein sequence ID" value="OsLima_08g0019060.04"/>
    <property type="gene ID" value="OsLima_08g0019060"/>
</dbReference>
<dbReference type="EnsemblPlants" id="OsLiXu_08g0020010.01">
    <property type="protein sequence ID" value="OsLiXu_08g0020010.01"/>
    <property type="gene ID" value="OsLiXu_08g0020010"/>
</dbReference>
<dbReference type="EnsemblPlants" id="OsLiXu_08g0020010.03">
    <property type="protein sequence ID" value="OsLiXu_08g0020010.03"/>
    <property type="gene ID" value="OsLiXu_08g0020010"/>
</dbReference>
<dbReference type="EnsemblPlants" id="OsLiXu_08g0020010.04">
    <property type="protein sequence ID" value="OsLiXu_08g0020010.04"/>
    <property type="gene ID" value="OsLiXu_08g0020010"/>
</dbReference>
<dbReference type="EnsemblPlants" id="OsMH63_08G019910_02">
    <property type="protein sequence ID" value="OsMH63_08G019910_02"/>
    <property type="gene ID" value="OsMH63_08G019910"/>
</dbReference>
<dbReference type="EnsemblPlants" id="OsMH63_08G019910_04">
    <property type="protein sequence ID" value="OsMH63_08G019910_04"/>
    <property type="gene ID" value="OsMH63_08G019910"/>
</dbReference>
<dbReference type="EnsemblPlants" id="OsMH63_08G019910_06">
    <property type="protein sequence ID" value="OsMH63_08G019910_06"/>
    <property type="gene ID" value="OsMH63_08G019910"/>
</dbReference>
<dbReference type="EnsemblPlants" id="OsPr106_08g0019830.02">
    <property type="protein sequence ID" value="OsPr106_08g0019830.02"/>
    <property type="gene ID" value="OsPr106_08g0019830"/>
</dbReference>
<dbReference type="EnsemblPlants" id="OsPr106_08g0019830.04">
    <property type="protein sequence ID" value="OsPr106_08g0019830.04"/>
    <property type="gene ID" value="OsPr106_08g0019830"/>
</dbReference>
<dbReference type="EnsemblPlants" id="OsPr106_08g0019830.05">
    <property type="protein sequence ID" value="OsPr106_08g0019830.05"/>
    <property type="gene ID" value="OsPr106_08g0019830"/>
</dbReference>
<dbReference type="EnsemblPlants" id="OsZS97_08G019770_03">
    <property type="protein sequence ID" value="OsZS97_08G019770_03"/>
    <property type="gene ID" value="OsZS97_08G019770"/>
</dbReference>
<dbReference type="EnsemblPlants" id="OsZS97_08G019770_06">
    <property type="protein sequence ID" value="OsZS97_08G019770_06"/>
    <property type="gene ID" value="OsZS97_08G019770"/>
</dbReference>
<dbReference type="Gramene" id="BGIOSGA028869-TA">
    <property type="protein sequence ID" value="BGIOSGA028869-PA"/>
    <property type="gene ID" value="BGIOSGA028869"/>
</dbReference>
<dbReference type="Gramene" id="OsGoSa_08g0019180.01">
    <property type="protein sequence ID" value="OsGoSa_08g0019180.01"/>
    <property type="gene ID" value="OsGoSa_08g0019180"/>
</dbReference>
<dbReference type="Gramene" id="OsGoSa_08g0019180.03">
    <property type="protein sequence ID" value="OsGoSa_08g0019180.03"/>
    <property type="gene ID" value="OsGoSa_08g0019180"/>
</dbReference>
<dbReference type="Gramene" id="OsGoSa_08g0019180.04">
    <property type="protein sequence ID" value="OsGoSa_08g0019180.04"/>
    <property type="gene ID" value="OsGoSa_08g0019180"/>
</dbReference>
<dbReference type="Gramene" id="OsIR64_08g0019750.01">
    <property type="protein sequence ID" value="OsIR64_08g0019750.01"/>
    <property type="gene ID" value="OsIR64_08g0019750"/>
</dbReference>
<dbReference type="Gramene" id="OsIR64_08g0019750.03">
    <property type="protein sequence ID" value="OsIR64_08g0019750.03"/>
    <property type="gene ID" value="OsIR64_08g0019750"/>
</dbReference>
<dbReference type="Gramene" id="OsIR64_08g0019750.04">
    <property type="protein sequence ID" value="OsIR64_08g0019750.04"/>
    <property type="gene ID" value="OsIR64_08g0019750"/>
</dbReference>
<dbReference type="Gramene" id="OsKYG_08g0019330.01">
    <property type="protein sequence ID" value="OsKYG_08g0019330.01"/>
    <property type="gene ID" value="OsKYG_08g0019330"/>
</dbReference>
<dbReference type="Gramene" id="OsKYG_08g0019330.03">
    <property type="protein sequence ID" value="OsKYG_08g0019330.03"/>
    <property type="gene ID" value="OsKYG_08g0019330"/>
</dbReference>
<dbReference type="Gramene" id="OsKYG_08g0019330.04">
    <property type="protein sequence ID" value="OsKYG_08g0019330.04"/>
    <property type="gene ID" value="OsKYG_08g0019330"/>
</dbReference>
<dbReference type="Gramene" id="OsLaMu_08g0019390.01">
    <property type="protein sequence ID" value="OsLaMu_08g0019390.01"/>
    <property type="gene ID" value="OsLaMu_08g0019390"/>
</dbReference>
<dbReference type="Gramene" id="OsLaMu_08g0019390.03">
    <property type="protein sequence ID" value="OsLaMu_08g0019390.03"/>
    <property type="gene ID" value="OsLaMu_08g0019390"/>
</dbReference>
<dbReference type="Gramene" id="OsLaMu_08g0019390.04">
    <property type="protein sequence ID" value="OsLaMu_08g0019390.04"/>
    <property type="gene ID" value="OsLaMu_08g0019390"/>
</dbReference>
<dbReference type="Gramene" id="OsLima_08g0019060.01">
    <property type="protein sequence ID" value="OsLima_08g0019060.01"/>
    <property type="gene ID" value="OsLima_08g0019060"/>
</dbReference>
<dbReference type="Gramene" id="OsLima_08g0019060.03">
    <property type="protein sequence ID" value="OsLima_08g0019060.03"/>
    <property type="gene ID" value="OsLima_08g0019060"/>
</dbReference>
<dbReference type="Gramene" id="OsLima_08g0019060.04">
    <property type="protein sequence ID" value="OsLima_08g0019060.04"/>
    <property type="gene ID" value="OsLima_08g0019060"/>
</dbReference>
<dbReference type="Gramene" id="OsLiXu_08g0020010.01">
    <property type="protein sequence ID" value="OsLiXu_08g0020010.01"/>
    <property type="gene ID" value="OsLiXu_08g0020010"/>
</dbReference>
<dbReference type="Gramene" id="OsLiXu_08g0020010.03">
    <property type="protein sequence ID" value="OsLiXu_08g0020010.03"/>
    <property type="gene ID" value="OsLiXu_08g0020010"/>
</dbReference>
<dbReference type="Gramene" id="OsLiXu_08g0020010.04">
    <property type="protein sequence ID" value="OsLiXu_08g0020010.04"/>
    <property type="gene ID" value="OsLiXu_08g0020010"/>
</dbReference>
<dbReference type="Gramene" id="OsMH63_08G019910_02">
    <property type="protein sequence ID" value="OsMH63_08G019910_02"/>
    <property type="gene ID" value="OsMH63_08G019910"/>
</dbReference>
<dbReference type="Gramene" id="OsMH63_08G019910_04">
    <property type="protein sequence ID" value="OsMH63_08G019910_04"/>
    <property type="gene ID" value="OsMH63_08G019910"/>
</dbReference>
<dbReference type="Gramene" id="OsMH63_08G019910_06">
    <property type="protein sequence ID" value="OsMH63_08G019910_06"/>
    <property type="gene ID" value="OsMH63_08G019910"/>
</dbReference>
<dbReference type="Gramene" id="OsPr106_08g0019830.02">
    <property type="protein sequence ID" value="OsPr106_08g0019830.02"/>
    <property type="gene ID" value="OsPr106_08g0019830"/>
</dbReference>
<dbReference type="Gramene" id="OsPr106_08g0019830.04">
    <property type="protein sequence ID" value="OsPr106_08g0019830.04"/>
    <property type="gene ID" value="OsPr106_08g0019830"/>
</dbReference>
<dbReference type="Gramene" id="OsPr106_08g0019830.05">
    <property type="protein sequence ID" value="OsPr106_08g0019830.05"/>
    <property type="gene ID" value="OsPr106_08g0019830"/>
</dbReference>
<dbReference type="Gramene" id="OsZS97_08G019770_03">
    <property type="protein sequence ID" value="OsZS97_08G019770_03"/>
    <property type="gene ID" value="OsZS97_08G019770"/>
</dbReference>
<dbReference type="Gramene" id="OsZS97_08G019770_06">
    <property type="protein sequence ID" value="OsZS97_08G019770_06"/>
    <property type="gene ID" value="OsZS97_08G019770"/>
</dbReference>
<dbReference type="HOGENOM" id="CLU_000288_59_3_1"/>
<dbReference type="OMA" id="GHRYRDE"/>
<dbReference type="OrthoDB" id="193931at2759"/>
<dbReference type="Proteomes" id="UP000007015">
    <property type="component" value="Chromosome 8"/>
</dbReference>
<dbReference type="GO" id="GO:0005737">
    <property type="term" value="C:cytoplasm"/>
    <property type="evidence" value="ECO:0007669"/>
    <property type="project" value="TreeGrafter"/>
</dbReference>
<dbReference type="GO" id="GO:0005634">
    <property type="term" value="C:nucleus"/>
    <property type="evidence" value="ECO:0007669"/>
    <property type="project" value="UniProtKB-SubCell"/>
</dbReference>
<dbReference type="GO" id="GO:0005524">
    <property type="term" value="F:ATP binding"/>
    <property type="evidence" value="ECO:0007669"/>
    <property type="project" value="UniProtKB-KW"/>
</dbReference>
<dbReference type="GO" id="GO:0106310">
    <property type="term" value="F:protein serine kinase activity"/>
    <property type="evidence" value="ECO:0007669"/>
    <property type="project" value="RHEA"/>
</dbReference>
<dbReference type="GO" id="GO:0004674">
    <property type="term" value="F:protein serine/threonine kinase activity"/>
    <property type="evidence" value="ECO:0007669"/>
    <property type="project" value="UniProtKB-KW"/>
</dbReference>
<dbReference type="GO" id="GO:0035556">
    <property type="term" value="P:intracellular signal transduction"/>
    <property type="evidence" value="ECO:0007669"/>
    <property type="project" value="TreeGrafter"/>
</dbReference>
<dbReference type="CDD" id="cd12122">
    <property type="entry name" value="AMPKA_C"/>
    <property type="match status" value="1"/>
</dbReference>
<dbReference type="CDD" id="cd14079">
    <property type="entry name" value="STKc_AMPK_alpha"/>
    <property type="match status" value="1"/>
</dbReference>
<dbReference type="CDD" id="cd14335">
    <property type="entry name" value="UBA_SnRK1_plant"/>
    <property type="match status" value="1"/>
</dbReference>
<dbReference type="FunFam" id="3.30.200.20:FF:000042">
    <property type="entry name" value="Aurora kinase A"/>
    <property type="match status" value="1"/>
</dbReference>
<dbReference type="FunFam" id="1.10.510.10:FF:000204">
    <property type="entry name" value="Non-specific serine/threonine protein kinase"/>
    <property type="match status" value="1"/>
</dbReference>
<dbReference type="FunFam" id="3.30.310.80:FF:000006">
    <property type="entry name" value="Non-specific serine/threonine protein kinase"/>
    <property type="match status" value="1"/>
</dbReference>
<dbReference type="Gene3D" id="3.30.310.80">
    <property type="entry name" value="Kinase associated domain 1, KA1"/>
    <property type="match status" value="1"/>
</dbReference>
<dbReference type="Gene3D" id="1.10.510.10">
    <property type="entry name" value="Transferase(Phosphotransferase) domain 1"/>
    <property type="match status" value="1"/>
</dbReference>
<dbReference type="InterPro" id="IPR028375">
    <property type="entry name" value="KA1/Ssp2_C"/>
</dbReference>
<dbReference type="InterPro" id="IPR001772">
    <property type="entry name" value="KA1_dom"/>
</dbReference>
<dbReference type="InterPro" id="IPR011009">
    <property type="entry name" value="Kinase-like_dom_sf"/>
</dbReference>
<dbReference type="InterPro" id="IPR000719">
    <property type="entry name" value="Prot_kinase_dom"/>
</dbReference>
<dbReference type="InterPro" id="IPR017441">
    <property type="entry name" value="Protein_kinase_ATP_BS"/>
</dbReference>
<dbReference type="InterPro" id="IPR008271">
    <property type="entry name" value="Ser/Thr_kinase_AS"/>
</dbReference>
<dbReference type="InterPro" id="IPR015940">
    <property type="entry name" value="UBA"/>
</dbReference>
<dbReference type="PANTHER" id="PTHR24346">
    <property type="entry name" value="MAP/MICROTUBULE AFFINITY-REGULATING KINASE"/>
    <property type="match status" value="1"/>
</dbReference>
<dbReference type="PANTHER" id="PTHR24346:SF103">
    <property type="entry name" value="NON-SPECIFIC SERINE_THREONINE PROTEIN KINASE"/>
    <property type="match status" value="1"/>
</dbReference>
<dbReference type="Pfam" id="PF02149">
    <property type="entry name" value="KA1"/>
    <property type="match status" value="1"/>
</dbReference>
<dbReference type="Pfam" id="PF00069">
    <property type="entry name" value="Pkinase"/>
    <property type="match status" value="1"/>
</dbReference>
<dbReference type="Pfam" id="PF00627">
    <property type="entry name" value="UBA"/>
    <property type="match status" value="1"/>
</dbReference>
<dbReference type="SMART" id="SM00220">
    <property type="entry name" value="S_TKc"/>
    <property type="match status" value="1"/>
</dbReference>
<dbReference type="SUPFAM" id="SSF103243">
    <property type="entry name" value="KA1-like"/>
    <property type="match status" value="1"/>
</dbReference>
<dbReference type="SUPFAM" id="SSF56112">
    <property type="entry name" value="Protein kinase-like (PK-like)"/>
    <property type="match status" value="1"/>
</dbReference>
<dbReference type="PROSITE" id="PS50032">
    <property type="entry name" value="KA1"/>
    <property type="match status" value="1"/>
</dbReference>
<dbReference type="PROSITE" id="PS00107">
    <property type="entry name" value="PROTEIN_KINASE_ATP"/>
    <property type="match status" value="1"/>
</dbReference>
<dbReference type="PROSITE" id="PS50011">
    <property type="entry name" value="PROTEIN_KINASE_DOM"/>
    <property type="match status" value="1"/>
</dbReference>
<dbReference type="PROSITE" id="PS00108">
    <property type="entry name" value="PROTEIN_KINASE_ST"/>
    <property type="match status" value="1"/>
</dbReference>
<dbReference type="PROSITE" id="PS50030">
    <property type="entry name" value="UBA"/>
    <property type="match status" value="1"/>
</dbReference>
<gene>
    <name evidence="1" type="primary">OSK4</name>
    <name evidence="5" type="ORF">OsI_29652</name>
</gene>
<reference key="1">
    <citation type="journal article" date="2005" name="PLoS Biol.">
        <title>The genomes of Oryza sativa: a history of duplications.</title>
        <authorList>
            <person name="Yu J."/>
            <person name="Wang J."/>
            <person name="Lin W."/>
            <person name="Li S."/>
            <person name="Li H."/>
            <person name="Zhou J."/>
            <person name="Ni P."/>
            <person name="Dong W."/>
            <person name="Hu S."/>
            <person name="Zeng C."/>
            <person name="Zhang J."/>
            <person name="Zhang Y."/>
            <person name="Li R."/>
            <person name="Xu Z."/>
            <person name="Li S."/>
            <person name="Li X."/>
            <person name="Zheng H."/>
            <person name="Cong L."/>
            <person name="Lin L."/>
            <person name="Yin J."/>
            <person name="Geng J."/>
            <person name="Li G."/>
            <person name="Shi J."/>
            <person name="Liu J."/>
            <person name="Lv H."/>
            <person name="Li J."/>
            <person name="Wang J."/>
            <person name="Deng Y."/>
            <person name="Ran L."/>
            <person name="Shi X."/>
            <person name="Wang X."/>
            <person name="Wu Q."/>
            <person name="Li C."/>
            <person name="Ren X."/>
            <person name="Wang J."/>
            <person name="Wang X."/>
            <person name="Li D."/>
            <person name="Liu D."/>
            <person name="Zhang X."/>
            <person name="Ji Z."/>
            <person name="Zhao W."/>
            <person name="Sun Y."/>
            <person name="Zhang Z."/>
            <person name="Bao J."/>
            <person name="Han Y."/>
            <person name="Dong L."/>
            <person name="Ji J."/>
            <person name="Chen P."/>
            <person name="Wu S."/>
            <person name="Liu J."/>
            <person name="Xiao Y."/>
            <person name="Bu D."/>
            <person name="Tan J."/>
            <person name="Yang L."/>
            <person name="Ye C."/>
            <person name="Zhang J."/>
            <person name="Xu J."/>
            <person name="Zhou Y."/>
            <person name="Yu Y."/>
            <person name="Zhang B."/>
            <person name="Zhuang S."/>
            <person name="Wei H."/>
            <person name="Liu B."/>
            <person name="Lei M."/>
            <person name="Yu H."/>
            <person name="Li Y."/>
            <person name="Xu H."/>
            <person name="Wei S."/>
            <person name="He X."/>
            <person name="Fang L."/>
            <person name="Zhang Z."/>
            <person name="Zhang Y."/>
            <person name="Huang X."/>
            <person name="Su Z."/>
            <person name="Tong W."/>
            <person name="Li J."/>
            <person name="Tong Z."/>
            <person name="Li S."/>
            <person name="Ye J."/>
            <person name="Wang L."/>
            <person name="Fang L."/>
            <person name="Lei T."/>
            <person name="Chen C.-S."/>
            <person name="Chen H.-C."/>
            <person name="Xu Z."/>
            <person name="Li H."/>
            <person name="Huang H."/>
            <person name="Zhang F."/>
            <person name="Xu H."/>
            <person name="Li N."/>
            <person name="Zhao C."/>
            <person name="Li S."/>
            <person name="Dong L."/>
            <person name="Huang Y."/>
            <person name="Li L."/>
            <person name="Xi Y."/>
            <person name="Qi Q."/>
            <person name="Li W."/>
            <person name="Zhang B."/>
            <person name="Hu W."/>
            <person name="Zhang Y."/>
            <person name="Tian X."/>
            <person name="Jiao Y."/>
            <person name="Liang X."/>
            <person name="Jin J."/>
            <person name="Gao L."/>
            <person name="Zheng W."/>
            <person name="Hao B."/>
            <person name="Liu S.-M."/>
            <person name="Wang W."/>
            <person name="Yuan L."/>
            <person name="Cao M."/>
            <person name="McDermott J."/>
            <person name="Samudrala R."/>
            <person name="Wang J."/>
            <person name="Wong G.K.-S."/>
            <person name="Yang H."/>
        </authorList>
    </citation>
    <scope>NUCLEOTIDE SEQUENCE [LARGE SCALE GENOMIC DNA]</scope>
    <source>
        <strain>cv. 93-11</strain>
    </source>
</reference>
<accession>B8BBT7</accession>
<organism>
    <name type="scientific">Oryza sativa subsp. indica</name>
    <name type="common">Rice</name>
    <dbReference type="NCBI Taxonomy" id="39946"/>
    <lineage>
        <taxon>Eukaryota</taxon>
        <taxon>Viridiplantae</taxon>
        <taxon>Streptophyta</taxon>
        <taxon>Embryophyta</taxon>
        <taxon>Tracheophyta</taxon>
        <taxon>Spermatophyta</taxon>
        <taxon>Magnoliopsida</taxon>
        <taxon>Liliopsida</taxon>
        <taxon>Poales</taxon>
        <taxon>Poaceae</taxon>
        <taxon>BOP clade</taxon>
        <taxon>Oryzoideae</taxon>
        <taxon>Oryzeae</taxon>
        <taxon>Oryzinae</taxon>
        <taxon>Oryza</taxon>
        <taxon>Oryza sativa</taxon>
    </lineage>
</organism>
<comment type="function">
    <text evidence="1">Suppressor of flowering in long days (LD) via the that up-regulation of HD1 and the down-regulation of EHD1. Can phosphorylate HD1 in the presence of HDR1.</text>
</comment>
<comment type="catalytic activity">
    <reaction evidence="1">
        <text>L-seryl-[protein] + ATP = O-phospho-L-seryl-[protein] + ADP + H(+)</text>
        <dbReference type="Rhea" id="RHEA:17989"/>
        <dbReference type="Rhea" id="RHEA-COMP:9863"/>
        <dbReference type="Rhea" id="RHEA-COMP:11604"/>
        <dbReference type="ChEBI" id="CHEBI:15378"/>
        <dbReference type="ChEBI" id="CHEBI:29999"/>
        <dbReference type="ChEBI" id="CHEBI:30616"/>
        <dbReference type="ChEBI" id="CHEBI:83421"/>
        <dbReference type="ChEBI" id="CHEBI:456216"/>
        <dbReference type="EC" id="2.7.11.1"/>
    </reaction>
</comment>
<comment type="catalytic activity">
    <reaction evidence="1">
        <text>L-threonyl-[protein] + ATP = O-phospho-L-threonyl-[protein] + ADP + H(+)</text>
        <dbReference type="Rhea" id="RHEA:46608"/>
        <dbReference type="Rhea" id="RHEA-COMP:11060"/>
        <dbReference type="Rhea" id="RHEA-COMP:11605"/>
        <dbReference type="ChEBI" id="CHEBI:15378"/>
        <dbReference type="ChEBI" id="CHEBI:30013"/>
        <dbReference type="ChEBI" id="CHEBI:30616"/>
        <dbReference type="ChEBI" id="CHEBI:61977"/>
        <dbReference type="ChEBI" id="CHEBI:456216"/>
        <dbReference type="EC" id="2.7.11.1"/>
    </reaction>
</comment>
<comment type="subunit">
    <text evidence="1">Interacts with HDR1.</text>
</comment>
<comment type="subcellular location">
    <subcellularLocation>
        <location evidence="1">Nucleus</location>
    </subcellularLocation>
</comment>
<comment type="tissue specificity">
    <text evidence="1">Strongly expressed in immature seeds. Mostly expressed in panicles, leaf sheaths and roots, and to a lower extent, in germinating seeds and leaf blades.</text>
</comment>
<comment type="similarity">
    <text evidence="2">Belongs to the protein kinase superfamily. Ser/Thr protein kinase family.</text>
</comment>
<sequence>MEGNARGGGHSEALKNYNLGRTLGIGSFGKVKIAEHKLTGHRVAIKILNRRQMRNMEMEEKAKREIKILRLFIHPHIIRLYEVIYTPTDIYVVMEYCKFGELFDYIVEKGRLQEDEARRIFQQIISGVEYCHRNMVVHRDLKPENLLLDSKYNVKLADFGLSNVMHDGHFLKTSCGSPNYAAPEVISGKLYAGPEVDVWSCGVILYALLCGTLPFDDENIPNLFKKIKGGIYTLPSHLSALARDLIPRMLVVDPMKRITIREIREHQWFQIRLPRYLAVPPPDTAQQAKMIDEDTLQDVVNLGYEKDHVCESLRNRLQNEATVAYYLLLDNRFRATSGYLGADYQESLERNLNRFASSESASSNTRHYLPGSSDPHASGLRPHYPVERKWALGLQSRAQPREIMIEVLKALEDLNVCWKKNGQYNMKCRWSVGYPQATDMLDVNHSFVDDSIIMDNGDVNGRLPAVIKFEIQLYKSRDEKYLLDMQRVTGPQLLFLDFCAAFLTKLRVL</sequence>
<evidence type="ECO:0000250" key="1">
    <source>
        <dbReference type="UniProtKB" id="Q852Q1"/>
    </source>
</evidence>
<evidence type="ECO:0000255" key="2">
    <source>
        <dbReference type="PROSITE-ProRule" id="PRU00159"/>
    </source>
</evidence>
<evidence type="ECO:0000255" key="3">
    <source>
        <dbReference type="PROSITE-ProRule" id="PRU00212"/>
    </source>
</evidence>
<evidence type="ECO:0000255" key="4">
    <source>
        <dbReference type="PROSITE-ProRule" id="PRU00565"/>
    </source>
</evidence>
<evidence type="ECO:0000312" key="5">
    <source>
        <dbReference type="EMBL" id="EEC83761.1"/>
    </source>
</evidence>